<sequence length="363" mass="40864">MKTICLIGGKLQGFEAAYLSKKADMKVVVIDKNPQALIRNYADEFHCFDVIKEPEKLLEISKNVDAILPVNENLECIKFLSSVKEEFSCPVLFDFEAYRISRDKKKSKEYFRSIGIPTPQDKPGRPPYFVKPPCESSSVGARIIYDEEELGELEPGMLVEEYVEGEVISLEVIGDGTHFAVVKETLIHIDRTYDCHMVTPLPSDLSFREISYSLAANLPLKGIMDVEAISGPQGLKVIEIDSRFPSQTPTAVYYSSGVNLIELLFRAFGEGVEEVKTLPEDRYCIYEHLMLAENGALIPVGEQVLSMGNDYGKYYEEPGIEIFLCRGEDPVFTLVFWGKDREEAENKKRTGLLILKDRFGAAV</sequence>
<gene>
    <name evidence="5" type="primary">pylC</name>
    <name type="ordered locus">MA_0153</name>
</gene>
<dbReference type="EC" id="6.3.2.59" evidence="4"/>
<dbReference type="EMBL" id="AE010299">
    <property type="protein sequence ID" value="AAM03606.1"/>
    <property type="molecule type" value="Genomic_DNA"/>
</dbReference>
<dbReference type="RefSeq" id="WP_011020211.1">
    <property type="nucleotide sequence ID" value="NC_003552.1"/>
</dbReference>
<dbReference type="SMR" id="Q8TUC0"/>
<dbReference type="STRING" id="188937.MA_0153"/>
<dbReference type="EnsemblBacteria" id="AAM03606">
    <property type="protein sequence ID" value="AAM03606"/>
    <property type="gene ID" value="MA_0153"/>
</dbReference>
<dbReference type="GeneID" id="1472045"/>
<dbReference type="KEGG" id="mac:MA_0153"/>
<dbReference type="HOGENOM" id="CLU_707177_0_0_2"/>
<dbReference type="InParanoid" id="Q8TUC0"/>
<dbReference type="OrthoDB" id="120341at2157"/>
<dbReference type="BioCyc" id="MetaCyc:MONOMER-17155"/>
<dbReference type="BRENDA" id="6.3.2.59">
    <property type="organism ID" value="7224"/>
</dbReference>
<dbReference type="UniPathway" id="UPA01028"/>
<dbReference type="Proteomes" id="UP000002487">
    <property type="component" value="Chromosome"/>
</dbReference>
<dbReference type="GO" id="GO:0005829">
    <property type="term" value="C:cytosol"/>
    <property type="evidence" value="ECO:0000318"/>
    <property type="project" value="GO_Central"/>
</dbReference>
<dbReference type="GO" id="GO:0005524">
    <property type="term" value="F:ATP binding"/>
    <property type="evidence" value="ECO:0007669"/>
    <property type="project" value="UniProtKB-KW"/>
</dbReference>
<dbReference type="GO" id="GO:0016874">
    <property type="term" value="F:ligase activity"/>
    <property type="evidence" value="ECO:0007669"/>
    <property type="project" value="UniProtKB-KW"/>
</dbReference>
<dbReference type="GO" id="GO:0046872">
    <property type="term" value="F:metal ion binding"/>
    <property type="evidence" value="ECO:0007669"/>
    <property type="project" value="UniProtKB-KW"/>
</dbReference>
<dbReference type="GO" id="GO:0071524">
    <property type="term" value="P:pyrrolysine biosynthetic process"/>
    <property type="evidence" value="ECO:0000315"/>
    <property type="project" value="UniProtKB"/>
</dbReference>
<dbReference type="Gene3D" id="3.30.470.20">
    <property type="entry name" value="ATP-grasp fold, B domain"/>
    <property type="match status" value="1"/>
</dbReference>
<dbReference type="Gene3D" id="3.40.50.720">
    <property type="entry name" value="NAD(P)-binding Rossmann-like Domain"/>
    <property type="match status" value="1"/>
</dbReference>
<dbReference type="InterPro" id="IPR011761">
    <property type="entry name" value="ATP-grasp"/>
</dbReference>
<dbReference type="InterPro" id="IPR003806">
    <property type="entry name" value="ATP-grasp_PylC-type"/>
</dbReference>
<dbReference type="InterPro" id="IPR048764">
    <property type="entry name" value="PylC_N"/>
</dbReference>
<dbReference type="InterPro" id="IPR023890">
    <property type="entry name" value="Pyrrolys_PylC"/>
</dbReference>
<dbReference type="NCBIfam" id="TIGR03909">
    <property type="entry name" value="pyrrolys_PylC"/>
    <property type="match status" value="1"/>
</dbReference>
<dbReference type="PANTHER" id="PTHR43055">
    <property type="entry name" value="FORMATE-DEPENDENT PHOSPHORIBOSYLGLYCINAMIDE FORMYLTRANSFERASE"/>
    <property type="match status" value="1"/>
</dbReference>
<dbReference type="PANTHER" id="PTHR43055:SF1">
    <property type="entry name" value="FORMATE-DEPENDENT PHOSPHORIBOSYLGLYCINAMIDE FORMYLTRANSFERASE"/>
    <property type="match status" value="1"/>
</dbReference>
<dbReference type="Pfam" id="PF02655">
    <property type="entry name" value="ATP-grasp_3"/>
    <property type="match status" value="1"/>
</dbReference>
<dbReference type="Pfam" id="PF21360">
    <property type="entry name" value="PylC-like_N"/>
    <property type="match status" value="1"/>
</dbReference>
<dbReference type="SUPFAM" id="SSF56059">
    <property type="entry name" value="Glutathione synthetase ATP-binding domain-like"/>
    <property type="match status" value="1"/>
</dbReference>
<dbReference type="PROSITE" id="PS50975">
    <property type="entry name" value="ATP_GRASP"/>
    <property type="match status" value="1"/>
</dbReference>
<name>PYLC_METAC</name>
<organism>
    <name type="scientific">Methanosarcina acetivorans (strain ATCC 35395 / DSM 2834 / JCM 12185 / C2A)</name>
    <dbReference type="NCBI Taxonomy" id="188937"/>
    <lineage>
        <taxon>Archaea</taxon>
        <taxon>Methanobacteriati</taxon>
        <taxon>Methanobacteriota</taxon>
        <taxon>Stenosarchaea group</taxon>
        <taxon>Methanomicrobia</taxon>
        <taxon>Methanosarcinales</taxon>
        <taxon>Methanosarcinaceae</taxon>
        <taxon>Methanosarcina</taxon>
    </lineage>
</organism>
<evidence type="ECO:0000250" key="1">
    <source>
        <dbReference type="UniProtKB" id="Q46E79"/>
    </source>
</evidence>
<evidence type="ECO:0000255" key="2">
    <source>
        <dbReference type="PROSITE-ProRule" id="PRU00409"/>
    </source>
</evidence>
<evidence type="ECO:0000269" key="3">
    <source>
    </source>
</evidence>
<evidence type="ECO:0000269" key="4">
    <source>
    </source>
</evidence>
<evidence type="ECO:0000303" key="5">
    <source>
    </source>
</evidence>
<evidence type="ECO:0000305" key="6"/>
<proteinExistence type="evidence at protein level"/>
<protein>
    <recommendedName>
        <fullName evidence="6">3-methyl-D-ornithine--L-lysine ligase</fullName>
        <ecNumber evidence="4">6.3.2.59</ecNumber>
    </recommendedName>
    <alternativeName>
        <fullName>(3R)-3-methyl-D-ornithine:L-lysine ligase</fullName>
    </alternativeName>
    <alternativeName>
        <fullName>Pyrrolysine biosynthesis protein PylC</fullName>
    </alternativeName>
</protein>
<keyword id="KW-0028">Amino-acid biosynthesis</keyword>
<keyword id="KW-0067">ATP-binding</keyword>
<keyword id="KW-0436">Ligase</keyword>
<keyword id="KW-0460">Magnesium</keyword>
<keyword id="KW-0479">Metal-binding</keyword>
<keyword id="KW-0547">Nucleotide-binding</keyword>
<keyword id="KW-1185">Reference proteome</keyword>
<comment type="function">
    <text evidence="3 4">Is required for the biosynthesis of pyrrolysine (PubMed:17204561, PubMed:21455182). Catalyzes the ATP-dependent ligation between (3R)-3-methyl-D-ornithine and L-lysine, leading to (3R)-3-methyl-D-ornithyl-N6-L-lysine (PubMed:21455182).</text>
</comment>
<comment type="catalytic activity">
    <reaction evidence="4">
        <text>(3R)-3-methyl-D-ornithine + L-lysine + ATP = (3R)-3-methyl-D-ornithyl-N(6)-L-lysine + ADP + phosphate + H(+)</text>
        <dbReference type="Rhea" id="RHEA:32763"/>
        <dbReference type="ChEBI" id="CHEBI:15378"/>
        <dbReference type="ChEBI" id="CHEBI:30616"/>
        <dbReference type="ChEBI" id="CHEBI:32551"/>
        <dbReference type="ChEBI" id="CHEBI:43474"/>
        <dbReference type="ChEBI" id="CHEBI:64642"/>
        <dbReference type="ChEBI" id="CHEBI:64643"/>
        <dbReference type="ChEBI" id="CHEBI:456216"/>
        <dbReference type="EC" id="6.3.2.59"/>
    </reaction>
    <physiologicalReaction direction="left-to-right" evidence="4">
        <dbReference type="Rhea" id="RHEA:32764"/>
    </physiologicalReaction>
</comment>
<comment type="cofactor">
    <cofactor evidence="1">
        <name>Mg(2+)</name>
        <dbReference type="ChEBI" id="CHEBI:18420"/>
    </cofactor>
    <text evidence="1">Binds 2 magnesium ions per subunit.</text>
</comment>
<comment type="pathway">
    <text evidence="3 4">Amino-acid biosynthesis; L-pyrrolysine biosynthesis.</text>
</comment>
<comment type="disruption phenotype">
    <text evidence="3">Cells lacking this gene are unable to translate UAG as pyrrolysine, and do not produce pyrrolysine.</text>
</comment>
<comment type="similarity">
    <text evidence="6">Belongs to the PylC family.</text>
</comment>
<feature type="chain" id="PRO_0000420351" description="3-methyl-D-ornithine--L-lysine ligase">
    <location>
        <begin position="1"/>
        <end position="363"/>
    </location>
</feature>
<feature type="domain" description="ATP-grasp" evidence="2">
    <location>
        <begin position="85"/>
        <end position="269"/>
    </location>
</feature>
<feature type="binding site" evidence="1">
    <location>
        <position position="10"/>
    </location>
    <ligand>
        <name>ATP</name>
        <dbReference type="ChEBI" id="CHEBI:30616"/>
    </ligand>
</feature>
<feature type="binding site" evidence="1">
    <location>
        <begin position="11"/>
        <end position="12"/>
    </location>
    <ligand>
        <name>L-lysine</name>
        <dbReference type="ChEBI" id="CHEBI:32551"/>
    </ligand>
</feature>
<feature type="binding site" evidence="1">
    <location>
        <position position="31"/>
    </location>
    <ligand>
        <name>ATP</name>
        <dbReference type="ChEBI" id="CHEBI:30616"/>
    </ligand>
</feature>
<feature type="binding site" evidence="1">
    <location>
        <begin position="49"/>
        <end position="50"/>
    </location>
    <ligand>
        <name>ATP</name>
        <dbReference type="ChEBI" id="CHEBI:30616"/>
    </ligand>
</feature>
<feature type="binding site" evidence="1">
    <location>
        <begin position="72"/>
        <end position="73"/>
    </location>
    <ligand>
        <name>ATP</name>
        <dbReference type="ChEBI" id="CHEBI:30616"/>
    </ligand>
</feature>
<feature type="binding site" evidence="1">
    <location>
        <position position="72"/>
    </location>
    <ligand>
        <name>L-lysine</name>
        <dbReference type="ChEBI" id="CHEBI:32551"/>
    </ligand>
</feature>
<feature type="binding site" evidence="1">
    <location>
        <position position="104"/>
    </location>
    <ligand>
        <name>ADP</name>
        <dbReference type="ChEBI" id="CHEBI:456216"/>
    </ligand>
</feature>
<feature type="binding site" evidence="1">
    <location>
        <position position="131"/>
    </location>
    <ligand>
        <name>ADP</name>
        <dbReference type="ChEBI" id="CHEBI:456216"/>
    </ligand>
</feature>
<feature type="binding site" evidence="1">
    <location>
        <position position="138"/>
    </location>
    <ligand>
        <name>ADP</name>
        <dbReference type="ChEBI" id="CHEBI:456216"/>
    </ligand>
</feature>
<feature type="binding site" evidence="1">
    <location>
        <begin position="160"/>
        <end position="163"/>
    </location>
    <ligand>
        <name>ADP</name>
        <dbReference type="ChEBI" id="CHEBI:456216"/>
    </ligand>
</feature>
<feature type="binding site" evidence="1">
    <location>
        <begin position="169"/>
        <end position="171"/>
    </location>
    <ligand>
        <name>D-ornithine</name>
        <dbReference type="ChEBI" id="CHEBI:57668"/>
    </ligand>
</feature>
<feature type="binding site" evidence="1">
    <location>
        <position position="225"/>
    </location>
    <ligand>
        <name>D-ornithine</name>
        <dbReference type="ChEBI" id="CHEBI:57668"/>
    </ligand>
</feature>
<feature type="binding site" evidence="1">
    <location>
        <position position="227"/>
    </location>
    <ligand>
        <name>Mg(2+)</name>
        <dbReference type="ChEBI" id="CHEBI:18420"/>
        <label>1</label>
    </ligand>
</feature>
<feature type="binding site" evidence="1">
    <location>
        <position position="239"/>
    </location>
    <ligand>
        <name>ADP</name>
        <dbReference type="ChEBI" id="CHEBI:456216"/>
    </ligand>
</feature>
<feature type="binding site" evidence="1">
    <location>
        <position position="239"/>
    </location>
    <ligand>
        <name>Mg(2+)</name>
        <dbReference type="ChEBI" id="CHEBI:18420"/>
        <label>1</label>
    </ligand>
</feature>
<feature type="binding site" evidence="1">
    <location>
        <position position="239"/>
    </location>
    <ligand>
        <name>Mg(2+)</name>
        <dbReference type="ChEBI" id="CHEBI:18420"/>
        <label>2</label>
    </ligand>
</feature>
<feature type="binding site" evidence="1">
    <location>
        <position position="241"/>
    </location>
    <ligand>
        <name>Mg(2+)</name>
        <dbReference type="ChEBI" id="CHEBI:18420"/>
        <label>2</label>
    </ligand>
</feature>
<feature type="binding site" evidence="1">
    <location>
        <begin position="243"/>
        <end position="248"/>
    </location>
    <ligand>
        <name>D-ornithine</name>
        <dbReference type="ChEBI" id="CHEBI:57668"/>
    </ligand>
</feature>
<feature type="binding site" evidence="1">
    <location>
        <position position="246"/>
    </location>
    <ligand>
        <name>L-lysine</name>
        <dbReference type="ChEBI" id="CHEBI:32551"/>
    </ligand>
</feature>
<feature type="binding site" evidence="1">
    <location>
        <position position="302"/>
    </location>
    <ligand>
        <name>D-ornithine</name>
        <dbReference type="ChEBI" id="CHEBI:57668"/>
    </ligand>
</feature>
<feature type="binding site" evidence="1">
    <location>
        <position position="302"/>
    </location>
    <ligand>
        <name>L-lysine</name>
        <dbReference type="ChEBI" id="CHEBI:32551"/>
    </ligand>
</feature>
<accession>Q8TUC0</accession>
<reference key="1">
    <citation type="journal article" date="2002" name="Genome Res.">
        <title>The genome of Methanosarcina acetivorans reveals extensive metabolic and physiological diversity.</title>
        <authorList>
            <person name="Galagan J.E."/>
            <person name="Nusbaum C."/>
            <person name="Roy A."/>
            <person name="Endrizzi M.G."/>
            <person name="Macdonald P."/>
            <person name="FitzHugh W."/>
            <person name="Calvo S."/>
            <person name="Engels R."/>
            <person name="Smirnov S."/>
            <person name="Atnoor D."/>
            <person name="Brown A."/>
            <person name="Allen N."/>
            <person name="Naylor J."/>
            <person name="Stange-Thomann N."/>
            <person name="DeArellano K."/>
            <person name="Johnson R."/>
            <person name="Linton L."/>
            <person name="McEwan P."/>
            <person name="McKernan K."/>
            <person name="Talamas J."/>
            <person name="Tirrell A."/>
            <person name="Ye W."/>
            <person name="Zimmer A."/>
            <person name="Barber R.D."/>
            <person name="Cann I."/>
            <person name="Graham D.E."/>
            <person name="Grahame D.A."/>
            <person name="Guss A.M."/>
            <person name="Hedderich R."/>
            <person name="Ingram-Smith C."/>
            <person name="Kuettner H.C."/>
            <person name="Krzycki J.A."/>
            <person name="Leigh J.A."/>
            <person name="Li W."/>
            <person name="Liu J."/>
            <person name="Mukhopadhyay B."/>
            <person name="Reeve J.N."/>
            <person name="Smith K."/>
            <person name="Springer T.A."/>
            <person name="Umayam L.A."/>
            <person name="White O."/>
            <person name="White R.H."/>
            <person name="de Macario E.C."/>
            <person name="Ferry J.G."/>
            <person name="Jarrell K.F."/>
            <person name="Jing H."/>
            <person name="Macario A.J.L."/>
            <person name="Paulsen I.T."/>
            <person name="Pritchett M."/>
            <person name="Sowers K.R."/>
            <person name="Swanson R.V."/>
            <person name="Zinder S.H."/>
            <person name="Lander E."/>
            <person name="Metcalf W.W."/>
            <person name="Birren B."/>
        </authorList>
    </citation>
    <scope>NUCLEOTIDE SEQUENCE [LARGE SCALE GENOMIC DNA]</scope>
    <source>
        <strain>ATCC 35395 / DSM 2834 / JCM 12185 / C2A</strain>
    </source>
</reference>
<reference key="2">
    <citation type="journal article" date="2007" name="Proc. Natl. Acad. Sci. U.S.A.">
        <title>A natural genetic code expansion cassette enables transmissible biosynthesis and genetic encoding of pyrrolysine.</title>
        <authorList>
            <person name="Longstaff D.G."/>
            <person name="Larue R.C."/>
            <person name="Faust J.E."/>
            <person name="Mahapatra A."/>
            <person name="Zhang L."/>
            <person name="Green-Church K.B."/>
            <person name="Krzycki J.A."/>
        </authorList>
    </citation>
    <scope>FUNCTION IN PYRROLYSINE BIOSYNTHESIS</scope>
    <scope>GENE NAME</scope>
    <scope>PATHWAY</scope>
    <scope>DISRUPTION PHENOTYPE</scope>
    <source>
        <strain>ATCC 35395 / DSM 2834 / JCM 12185 / C2A</strain>
    </source>
</reference>
<reference key="3">
    <citation type="journal article" date="2011" name="Nature">
        <title>The complete biosynthesis of the genetically encoded amino acid pyrrolysine from lysine.</title>
        <authorList>
            <person name="Gaston M.A."/>
            <person name="Zhang L."/>
            <person name="Green-Church K.B."/>
            <person name="Krzycki J.A."/>
        </authorList>
    </citation>
    <scope>FUNCTION</scope>
    <scope>CATALYTIC ACTIVITY</scope>
    <scope>PATHWAY</scope>
    <source>
        <strain>ATCC 35395 / DSM 2834 / JCM 12185 / C2A</strain>
    </source>
</reference>